<feature type="chain" id="PRO_1000130604" description="Nucleotide-binding protein BamMC406_2474">
    <location>
        <begin position="1"/>
        <end position="161"/>
    </location>
</feature>
<comment type="function">
    <text evidence="1">Nucleotide-binding protein.</text>
</comment>
<comment type="similarity">
    <text evidence="1">Belongs to the YajQ family.</text>
</comment>
<evidence type="ECO:0000255" key="1">
    <source>
        <dbReference type="HAMAP-Rule" id="MF_00632"/>
    </source>
</evidence>
<dbReference type="EMBL" id="CP001025">
    <property type="protein sequence ID" value="ACB64952.1"/>
    <property type="molecule type" value="Genomic_DNA"/>
</dbReference>
<dbReference type="RefSeq" id="WP_012364548.1">
    <property type="nucleotide sequence ID" value="NC_010551.1"/>
</dbReference>
<dbReference type="SMR" id="B1YVE8"/>
<dbReference type="KEGG" id="bac:BamMC406_2474"/>
<dbReference type="HOGENOM" id="CLU_099839_1_0_4"/>
<dbReference type="OrthoDB" id="9801447at2"/>
<dbReference type="Proteomes" id="UP000001680">
    <property type="component" value="Chromosome 1"/>
</dbReference>
<dbReference type="GO" id="GO:0005829">
    <property type="term" value="C:cytosol"/>
    <property type="evidence" value="ECO:0007669"/>
    <property type="project" value="TreeGrafter"/>
</dbReference>
<dbReference type="GO" id="GO:0000166">
    <property type="term" value="F:nucleotide binding"/>
    <property type="evidence" value="ECO:0007669"/>
    <property type="project" value="TreeGrafter"/>
</dbReference>
<dbReference type="CDD" id="cd11740">
    <property type="entry name" value="YajQ_like"/>
    <property type="match status" value="1"/>
</dbReference>
<dbReference type="Gene3D" id="3.30.70.990">
    <property type="entry name" value="YajQ-like, domain 2"/>
    <property type="match status" value="1"/>
</dbReference>
<dbReference type="HAMAP" id="MF_00632">
    <property type="entry name" value="YajQ"/>
    <property type="match status" value="1"/>
</dbReference>
<dbReference type="InterPro" id="IPR007551">
    <property type="entry name" value="DUF520"/>
</dbReference>
<dbReference type="InterPro" id="IPR035570">
    <property type="entry name" value="UPF0234_N"/>
</dbReference>
<dbReference type="InterPro" id="IPR036183">
    <property type="entry name" value="YajQ-like_sf"/>
</dbReference>
<dbReference type="NCBIfam" id="NF003819">
    <property type="entry name" value="PRK05412.1"/>
    <property type="match status" value="1"/>
</dbReference>
<dbReference type="PANTHER" id="PTHR30476">
    <property type="entry name" value="UPF0234 PROTEIN YAJQ"/>
    <property type="match status" value="1"/>
</dbReference>
<dbReference type="PANTHER" id="PTHR30476:SF0">
    <property type="entry name" value="UPF0234 PROTEIN YAJQ"/>
    <property type="match status" value="1"/>
</dbReference>
<dbReference type="Pfam" id="PF04461">
    <property type="entry name" value="DUF520"/>
    <property type="match status" value="1"/>
</dbReference>
<dbReference type="SUPFAM" id="SSF89963">
    <property type="entry name" value="YajQ-like"/>
    <property type="match status" value="2"/>
</dbReference>
<accession>B1YVE8</accession>
<name>Y2474_BURA4</name>
<reference key="1">
    <citation type="submission" date="2008-04" db="EMBL/GenBank/DDBJ databases">
        <title>Complete sequence of chromosome 1 of Burkholderia ambifaria MC40-6.</title>
        <authorList>
            <person name="Copeland A."/>
            <person name="Lucas S."/>
            <person name="Lapidus A."/>
            <person name="Glavina del Rio T."/>
            <person name="Dalin E."/>
            <person name="Tice H."/>
            <person name="Pitluck S."/>
            <person name="Chain P."/>
            <person name="Malfatti S."/>
            <person name="Shin M."/>
            <person name="Vergez L."/>
            <person name="Lang D."/>
            <person name="Schmutz J."/>
            <person name="Larimer F."/>
            <person name="Land M."/>
            <person name="Hauser L."/>
            <person name="Kyrpides N."/>
            <person name="Lykidis A."/>
            <person name="Ramette A."/>
            <person name="Konstantinidis K."/>
            <person name="Tiedje J."/>
            <person name="Richardson P."/>
        </authorList>
    </citation>
    <scope>NUCLEOTIDE SEQUENCE [LARGE SCALE GENOMIC DNA]</scope>
    <source>
        <strain>MC40-6</strain>
    </source>
</reference>
<protein>
    <recommendedName>
        <fullName evidence="1">Nucleotide-binding protein BamMC406_2474</fullName>
    </recommendedName>
</protein>
<sequence length="161" mass="18133">MPSFDVVSEANMIEVKNAIEQSNKEISTRFDFKGSDARVEQKERELTLFADDDFKLGQVKDVLINKLAKRNVDVRFLDYGKVEKIGGDKVKQIVTVKKGVTGDLAKKIVRLVKDSKIKVQASIQGDAVRVTGTKRDDLQSVIAMLRKDVTDTPLDFNNFRD</sequence>
<gene>
    <name type="ordered locus">BamMC406_2474</name>
</gene>
<keyword id="KW-0547">Nucleotide-binding</keyword>
<organism>
    <name type="scientific">Burkholderia ambifaria (strain MC40-6)</name>
    <dbReference type="NCBI Taxonomy" id="398577"/>
    <lineage>
        <taxon>Bacteria</taxon>
        <taxon>Pseudomonadati</taxon>
        <taxon>Pseudomonadota</taxon>
        <taxon>Betaproteobacteria</taxon>
        <taxon>Burkholderiales</taxon>
        <taxon>Burkholderiaceae</taxon>
        <taxon>Burkholderia</taxon>
        <taxon>Burkholderia cepacia complex</taxon>
    </lineage>
</organism>
<proteinExistence type="inferred from homology"/>